<feature type="chain" id="PRO_0000207671" description="Phospholipid-transporting ATPase accessory subunit LEM3">
    <location>
        <begin position="1"/>
        <end position="414"/>
    </location>
</feature>
<feature type="topological domain" description="Cytoplasmic" evidence="12">
    <location>
        <begin position="1"/>
        <end position="74"/>
    </location>
</feature>
<feature type="transmembrane region" description="Helical" evidence="1">
    <location>
        <begin position="75"/>
        <end position="95"/>
    </location>
</feature>
<feature type="topological domain" description="Extracellular" evidence="12">
    <location>
        <begin position="96"/>
        <end position="372"/>
    </location>
</feature>
<feature type="transmembrane region" description="Helical" evidence="1">
    <location>
        <begin position="373"/>
        <end position="393"/>
    </location>
</feature>
<feature type="topological domain" description="Cytoplasmic" evidence="12">
    <location>
        <begin position="394"/>
        <end position="414"/>
    </location>
</feature>
<feature type="region of interest" description="Required for localization to the plasma membrane" evidence="8">
    <location>
        <begin position="1"/>
        <end position="50"/>
    </location>
</feature>
<feature type="region of interest" description="Disordered" evidence="2">
    <location>
        <begin position="20"/>
        <end position="52"/>
    </location>
</feature>
<feature type="region of interest" description="Required for localization to the plasma membrane" evidence="8">
    <location>
        <begin position="400"/>
        <end position="414"/>
    </location>
</feature>
<feature type="compositionally biased region" description="Acidic residues" evidence="2">
    <location>
        <begin position="26"/>
        <end position="42"/>
    </location>
</feature>
<feature type="modified residue" description="Phosphoserine" evidence="27 28 29">
    <location>
        <position position="36"/>
    </location>
</feature>
<feature type="glycosylation site" description="N-linked (GlcNAc...) asparagine" evidence="1">
    <location>
        <position position="113"/>
    </location>
</feature>
<feature type="glycosylation site" description="N-linked (GlcNAc...) asparagine" evidence="8">
    <location>
        <position position="240"/>
    </location>
</feature>
<feature type="glycosylation site" description="N-linked (GlcNAc...) asparagine" evidence="8 18">
    <location>
        <position position="256"/>
    </location>
</feature>
<feature type="glycosylation site" description="N-linked (GlcNAc...) asparagine" evidence="1">
    <location>
        <position position="279"/>
    </location>
</feature>
<feature type="glycosylation site" description="N-linked (GlcNAc...) asparagine" evidence="8">
    <location>
        <position position="298"/>
    </location>
</feature>
<feature type="glycosylation site" description="N-linked (GlcNAc...) asparagine" evidence="8">
    <location>
        <position position="332"/>
    </location>
</feature>
<feature type="disulfide bond" evidence="8 9 13 14 15 16 17 18 19 20 21 22 23 24 25 26">
    <location>
        <begin position="110"/>
        <end position="159"/>
    </location>
</feature>
<feature type="disulfide bond" evidence="14 15 16 17 18 19 20 21 22 23 24 25 26">
    <location>
        <begin position="216"/>
        <end position="231"/>
    </location>
</feature>
<feature type="mutagenesis site" description="Increases glucosylceramide transport activity of DNF1 and DNF2, but not their phosphatidylethanolamine or phosphatidylcholine transport activity." evidence="8">
    <original>R</original>
    <variation>A</variation>
    <location>
        <position position="51"/>
    </location>
</feature>
<feature type="mutagenesis site" description="Mildly reduces interaction with DNF1." evidence="7">
    <original>A</original>
    <variation>V</variation>
    <location>
        <position position="65"/>
    </location>
</feature>
<feature type="mutagenesis site" description="Reduces interaction with DNF1." evidence="7">
    <original>A</original>
    <variation>T</variation>
    <location>
        <position position="83"/>
    </location>
</feature>
<feature type="mutagenesis site" description="Strongly reduces interaction with DNF1. Mildly resistant to miltefosine. Decreases protein level. Normal protein level; when associated with C-159." evidence="7">
    <original>C</original>
    <variation>A</variation>
    <location>
        <position position="110"/>
    </location>
</feature>
<feature type="mutagenesis site" description="Strongly reduces interaction with DNF1. Mildly resistant to miltefosine. Decreases protein level. Normal protein level; when associated with C-110." evidence="7">
    <original>C</original>
    <variation>A</variation>
    <location>
        <position position="159"/>
    </location>
</feature>
<feature type="mutagenesis site" description="Decreases DNF1 activity. Reduces interaction with DNF1. Resistant to miltefosine. Sensitive to duramycin." evidence="7">
    <original>C</original>
    <variation>A</variation>
    <location>
        <position position="216"/>
    </location>
</feature>
<feature type="mutagenesis site" description="Mildly decreases DNF1 activity. Reduces interaction with DNF1. Resistant to miltefosine." evidence="7">
    <original>C</original>
    <variation>A</variation>
    <location>
        <position position="231"/>
    </location>
</feature>
<feature type="mutagenesis site" description="Strongly reduces interaction with DNF1." evidence="7">
    <original>S</original>
    <variation>L</variation>
    <location>
        <position position="237"/>
    </location>
</feature>
<feature type="mutagenesis site" description="Reduces interaction with DNF1." evidence="7">
    <original>G</original>
    <variation>E</variation>
    <location>
        <position position="375"/>
    </location>
</feature>
<feature type="mutagenesis site" description="Strongly reduces interaction with DNF1." evidence="7">
    <original>A</original>
    <variation>V</variation>
    <location>
        <position position="404"/>
    </location>
</feature>
<feature type="helix" evidence="33">
    <location>
        <begin position="37"/>
        <end position="43"/>
    </location>
</feature>
<feature type="turn" evidence="33">
    <location>
        <begin position="57"/>
        <end position="61"/>
    </location>
</feature>
<feature type="helix" evidence="33">
    <location>
        <begin position="72"/>
        <end position="98"/>
    </location>
</feature>
<feature type="strand" evidence="33">
    <location>
        <begin position="102"/>
        <end position="106"/>
    </location>
</feature>
<feature type="turn" evidence="33">
    <location>
        <begin position="108"/>
        <end position="113"/>
    </location>
</feature>
<feature type="strand" evidence="33">
    <location>
        <begin position="125"/>
        <end position="129"/>
    </location>
</feature>
<feature type="strand" evidence="34">
    <location>
        <begin position="134"/>
        <end position="137"/>
    </location>
</feature>
<feature type="strand" evidence="33">
    <location>
        <begin position="141"/>
        <end position="145"/>
    </location>
</feature>
<feature type="strand" evidence="31">
    <location>
        <begin position="149"/>
        <end position="151"/>
    </location>
</feature>
<feature type="strand" evidence="33">
    <location>
        <begin position="157"/>
        <end position="167"/>
    </location>
</feature>
<feature type="strand" evidence="33">
    <location>
        <begin position="173"/>
        <end position="181"/>
    </location>
</feature>
<feature type="helix" evidence="33">
    <location>
        <begin position="189"/>
        <end position="191"/>
    </location>
</feature>
<feature type="helix" evidence="33">
    <location>
        <begin position="195"/>
        <end position="198"/>
    </location>
</feature>
<feature type="helix" evidence="33">
    <location>
        <begin position="205"/>
        <end position="209"/>
    </location>
</feature>
<feature type="strand" evidence="33">
    <location>
        <begin position="212"/>
        <end position="214"/>
    </location>
</feature>
<feature type="strand" evidence="30">
    <location>
        <begin position="218"/>
        <end position="221"/>
    </location>
</feature>
<feature type="strand" evidence="33">
    <location>
        <begin position="223"/>
        <end position="225"/>
    </location>
</feature>
<feature type="strand" evidence="33">
    <location>
        <begin position="227"/>
        <end position="230"/>
    </location>
</feature>
<feature type="helix" evidence="33">
    <location>
        <begin position="233"/>
        <end position="236"/>
    </location>
</feature>
<feature type="strand" evidence="33">
    <location>
        <begin position="245"/>
        <end position="251"/>
    </location>
</feature>
<feature type="strand" evidence="33">
    <location>
        <begin position="260"/>
        <end position="265"/>
    </location>
</feature>
<feature type="helix" evidence="33">
    <location>
        <begin position="267"/>
        <end position="271"/>
    </location>
</feature>
<feature type="strand" evidence="33">
    <location>
        <begin position="280"/>
        <end position="284"/>
    </location>
</feature>
<feature type="helix" evidence="33">
    <location>
        <begin position="287"/>
        <end position="289"/>
    </location>
</feature>
<feature type="turn" evidence="33">
    <location>
        <begin position="290"/>
        <end position="292"/>
    </location>
</feature>
<feature type="strand" evidence="30">
    <location>
        <begin position="293"/>
        <end position="295"/>
    </location>
</feature>
<feature type="turn" evidence="33">
    <location>
        <begin position="299"/>
        <end position="301"/>
    </location>
</feature>
<feature type="turn" evidence="33">
    <location>
        <begin position="305"/>
        <end position="307"/>
    </location>
</feature>
<feature type="helix" evidence="33">
    <location>
        <begin position="309"/>
        <end position="314"/>
    </location>
</feature>
<feature type="strand" evidence="33">
    <location>
        <begin position="319"/>
        <end position="332"/>
    </location>
</feature>
<feature type="strand" evidence="33">
    <location>
        <begin position="337"/>
        <end position="345"/>
    </location>
</feature>
<feature type="helix" evidence="33">
    <location>
        <begin position="351"/>
        <end position="353"/>
    </location>
</feature>
<feature type="strand" evidence="33">
    <location>
        <begin position="356"/>
        <end position="362"/>
    </location>
</feature>
<feature type="strand" evidence="32">
    <location>
        <begin position="366"/>
        <end position="369"/>
    </location>
</feature>
<feature type="helix" evidence="33">
    <location>
        <begin position="373"/>
        <end position="399"/>
    </location>
</feature>
<feature type="helix" evidence="32">
    <location>
        <begin position="406"/>
        <end position="408"/>
    </location>
</feature>
<feature type="helix" evidence="33">
    <location>
        <begin position="410"/>
        <end position="413"/>
    </location>
</feature>
<dbReference type="EMBL" id="Z46259">
    <property type="protein sequence ID" value="CAA86374.1"/>
    <property type="molecule type" value="Genomic_DNA"/>
</dbReference>
<dbReference type="EMBL" id="Z71599">
    <property type="protein sequence ID" value="CAA96254.1"/>
    <property type="molecule type" value="Genomic_DNA"/>
</dbReference>
<dbReference type="EMBL" id="BK006947">
    <property type="protein sequence ID" value="DAA10239.1"/>
    <property type="molecule type" value="Genomic_DNA"/>
</dbReference>
<dbReference type="PIR" id="S55865">
    <property type="entry name" value="S55865"/>
</dbReference>
<dbReference type="RefSeq" id="NP_014076.1">
    <property type="nucleotide sequence ID" value="NM_001183161.1"/>
</dbReference>
<dbReference type="PDB" id="7DRX">
    <property type="method" value="EM"/>
    <property type="resolution" value="2.90 A"/>
    <property type="chains" value="B=1-414"/>
</dbReference>
<dbReference type="PDB" id="7DSH">
    <property type="method" value="EM"/>
    <property type="resolution" value="3.67 A"/>
    <property type="chains" value="B=1-414"/>
</dbReference>
<dbReference type="PDB" id="7DSI">
    <property type="method" value="EM"/>
    <property type="resolution" value="3.21 A"/>
    <property type="chains" value="B=1-414"/>
</dbReference>
<dbReference type="PDB" id="7F7F">
    <property type="method" value="EM"/>
    <property type="resolution" value="3.81 A"/>
    <property type="chains" value="B=1-414"/>
</dbReference>
<dbReference type="PDB" id="7KY5">
    <property type="method" value="EM"/>
    <property type="resolution" value="3.98 A"/>
    <property type="chains" value="B=1-414"/>
</dbReference>
<dbReference type="PDB" id="7KY7">
    <property type="method" value="EM"/>
    <property type="resolution" value="3.08 A"/>
    <property type="chains" value="B=1-414"/>
</dbReference>
<dbReference type="PDB" id="7KY8">
    <property type="method" value="EM"/>
    <property type="resolution" value="3.85 A"/>
    <property type="chains" value="B=1-414"/>
</dbReference>
<dbReference type="PDB" id="7KY9">
    <property type="method" value="EM"/>
    <property type="resolution" value="4.05 A"/>
    <property type="chains" value="B=1-414"/>
</dbReference>
<dbReference type="PDB" id="7KYA">
    <property type="method" value="EM"/>
    <property type="resolution" value="3.50 A"/>
    <property type="chains" value="B=1-414"/>
</dbReference>
<dbReference type="PDB" id="7KYB">
    <property type="method" value="EM"/>
    <property type="resolution" value="3.20 A"/>
    <property type="chains" value="B=1-414"/>
</dbReference>
<dbReference type="PDB" id="7KYC">
    <property type="method" value="EM"/>
    <property type="resolution" value="2.80 A"/>
    <property type="chains" value="B=1-414"/>
</dbReference>
<dbReference type="PDB" id="7WHV">
    <property type="method" value="EM"/>
    <property type="resolution" value="2.80 A"/>
    <property type="chains" value="B=1-414"/>
</dbReference>
<dbReference type="PDB" id="7WHW">
    <property type="method" value="EM"/>
    <property type="resolution" value="3.10 A"/>
    <property type="chains" value="B=1-414"/>
</dbReference>
<dbReference type="PDBsum" id="7DRX"/>
<dbReference type="PDBsum" id="7DSH"/>
<dbReference type="PDBsum" id="7DSI"/>
<dbReference type="PDBsum" id="7F7F"/>
<dbReference type="PDBsum" id="7KY5"/>
<dbReference type="PDBsum" id="7KY7"/>
<dbReference type="PDBsum" id="7KY8"/>
<dbReference type="PDBsum" id="7KY9"/>
<dbReference type="PDBsum" id="7KYA"/>
<dbReference type="PDBsum" id="7KYB"/>
<dbReference type="PDBsum" id="7KYC"/>
<dbReference type="PDBsum" id="7WHV"/>
<dbReference type="PDBsum" id="7WHW"/>
<dbReference type="EMDB" id="EMD-23068"/>
<dbReference type="EMDB" id="EMD-23070"/>
<dbReference type="EMDB" id="EMD-23071"/>
<dbReference type="EMDB" id="EMD-23072"/>
<dbReference type="EMDB" id="EMD-23073"/>
<dbReference type="EMDB" id="EMD-23074"/>
<dbReference type="EMDB" id="EMD-23075"/>
<dbReference type="EMDB" id="EMD-30829"/>
<dbReference type="EMDB" id="EMD-30833"/>
<dbReference type="EMDB" id="EMD-30834"/>
<dbReference type="EMDB" id="EMD-31487"/>
<dbReference type="EMDB" id="EMD-32512"/>
<dbReference type="EMDB" id="EMD-32513"/>
<dbReference type="SMR" id="P42838"/>
<dbReference type="BioGRID" id="35517">
    <property type="interactions" value="264"/>
</dbReference>
<dbReference type="ComplexPortal" id="CPX-1021">
    <property type="entry name" value="DNF1-LEM3 P4-ATPase complex"/>
</dbReference>
<dbReference type="ComplexPortal" id="CPX-1022">
    <property type="entry name" value="DNF2-LEM3 P4-ATPase complex"/>
</dbReference>
<dbReference type="DIP" id="DIP-4598N"/>
<dbReference type="FunCoup" id="P42838">
    <property type="interactions" value="402"/>
</dbReference>
<dbReference type="IntAct" id="P42838">
    <property type="interactions" value="25"/>
</dbReference>
<dbReference type="MINT" id="P42838"/>
<dbReference type="STRING" id="4932.YNL323W"/>
<dbReference type="TCDB" id="8.A.27.1.1">
    <property type="family name" value="the cdc50 p-type atpase lipid flippase subunit (cdc50) family"/>
</dbReference>
<dbReference type="GlyCosmos" id="P42838">
    <property type="glycosylation" value="6 sites, No reported glycans"/>
</dbReference>
<dbReference type="GlyGen" id="P42838">
    <property type="glycosylation" value="6 sites"/>
</dbReference>
<dbReference type="iPTMnet" id="P42838"/>
<dbReference type="PaxDb" id="4932-YNL323W"/>
<dbReference type="PeptideAtlas" id="P42838"/>
<dbReference type="EnsemblFungi" id="YNL323W_mRNA">
    <property type="protein sequence ID" value="YNL323W"/>
    <property type="gene ID" value="YNL323W"/>
</dbReference>
<dbReference type="GeneID" id="855393"/>
<dbReference type="KEGG" id="sce:YNL323W"/>
<dbReference type="AGR" id="SGD:S000005267"/>
<dbReference type="SGD" id="S000005267">
    <property type="gene designation" value="LEM3"/>
</dbReference>
<dbReference type="VEuPathDB" id="FungiDB:YNL323W"/>
<dbReference type="eggNOG" id="KOG2952">
    <property type="taxonomic scope" value="Eukaryota"/>
</dbReference>
<dbReference type="GeneTree" id="ENSGT00390000004660"/>
<dbReference type="HOGENOM" id="CLU_025025_0_1_1"/>
<dbReference type="InParanoid" id="P42838"/>
<dbReference type="OMA" id="WWTDTNV"/>
<dbReference type="OrthoDB" id="340608at2759"/>
<dbReference type="BioCyc" id="YEAST:G3O-33308-MONOMER"/>
<dbReference type="BioGRID-ORCS" id="855393">
    <property type="hits" value="1 hit in 10 CRISPR screens"/>
</dbReference>
<dbReference type="PRO" id="PR:P42838"/>
<dbReference type="Proteomes" id="UP000002311">
    <property type="component" value="Chromosome XIV"/>
</dbReference>
<dbReference type="RNAct" id="P42838">
    <property type="molecule type" value="protein"/>
</dbReference>
<dbReference type="GO" id="GO:0005737">
    <property type="term" value="C:cytoplasm"/>
    <property type="evidence" value="ECO:0007005"/>
    <property type="project" value="SGD"/>
</dbReference>
<dbReference type="GO" id="GO:0005783">
    <property type="term" value="C:endoplasmic reticulum"/>
    <property type="evidence" value="ECO:0000314"/>
    <property type="project" value="SGD"/>
</dbReference>
<dbReference type="GO" id="GO:0005794">
    <property type="term" value="C:Golgi apparatus"/>
    <property type="evidence" value="ECO:0000318"/>
    <property type="project" value="GO_Central"/>
</dbReference>
<dbReference type="GO" id="GO:1990531">
    <property type="term" value="C:phospholipid-translocating ATPase complex"/>
    <property type="evidence" value="ECO:0000353"/>
    <property type="project" value="SGD"/>
</dbReference>
<dbReference type="GO" id="GO:0005886">
    <property type="term" value="C:plasma membrane"/>
    <property type="evidence" value="ECO:0000314"/>
    <property type="project" value="SGD"/>
</dbReference>
<dbReference type="GO" id="GO:0140331">
    <property type="term" value="P:aminophospholipid translocation"/>
    <property type="evidence" value="ECO:0007669"/>
    <property type="project" value="GOC"/>
</dbReference>
<dbReference type="GO" id="GO:0007166">
    <property type="term" value="P:cell surface receptor signaling pathway"/>
    <property type="evidence" value="ECO:0000315"/>
    <property type="project" value="SGD"/>
</dbReference>
<dbReference type="GO" id="GO:0045332">
    <property type="term" value="P:phospholipid translocation"/>
    <property type="evidence" value="ECO:0000314"/>
    <property type="project" value="UniProtKB"/>
</dbReference>
<dbReference type="GO" id="GO:0044088">
    <property type="term" value="P:regulation of vacuole organization"/>
    <property type="evidence" value="ECO:0000316"/>
    <property type="project" value="SGD"/>
</dbReference>
<dbReference type="InterPro" id="IPR005045">
    <property type="entry name" value="CDC50/LEM3_fam"/>
</dbReference>
<dbReference type="PANTHER" id="PTHR10926">
    <property type="entry name" value="CELL CYCLE CONTROL PROTEIN 50"/>
    <property type="match status" value="1"/>
</dbReference>
<dbReference type="PANTHER" id="PTHR10926:SF20">
    <property type="entry name" value="PHOSPHOLIPID-TRANSPORTING ATPASE ACCESSORY SUBUNIT LEM3"/>
    <property type="match status" value="1"/>
</dbReference>
<dbReference type="Pfam" id="PF03381">
    <property type="entry name" value="CDC50"/>
    <property type="match status" value="1"/>
</dbReference>
<dbReference type="PIRSF" id="PIRSF015840">
    <property type="entry name" value="DUF284_TM_euk"/>
    <property type="match status" value="1"/>
</dbReference>
<name>LEM3_YEAST</name>
<gene>
    <name evidence="11" type="primary">LEM3</name>
    <name type="synonym">BRE3</name>
    <name evidence="10" type="synonym">ROS3</name>
    <name type="ordered locus">YNL323W</name>
    <name type="ORF">N0333</name>
</gene>
<evidence type="ECO:0000255" key="1"/>
<evidence type="ECO:0000256" key="2">
    <source>
        <dbReference type="SAM" id="MobiDB-lite"/>
    </source>
</evidence>
<evidence type="ECO:0000269" key="3">
    <source>
    </source>
</evidence>
<evidence type="ECO:0000269" key="4">
    <source>
    </source>
</evidence>
<evidence type="ECO:0000269" key="5">
    <source>
    </source>
</evidence>
<evidence type="ECO:0000269" key="6">
    <source>
    </source>
</evidence>
<evidence type="ECO:0000269" key="7">
    <source>
    </source>
</evidence>
<evidence type="ECO:0000269" key="8">
    <source>
    </source>
</evidence>
<evidence type="ECO:0000269" key="9">
    <source>
    </source>
</evidence>
<evidence type="ECO:0000303" key="10">
    <source>
    </source>
</evidence>
<evidence type="ECO:0000303" key="11">
    <source>
    </source>
</evidence>
<evidence type="ECO:0000305" key="12"/>
<evidence type="ECO:0000305" key="13">
    <source>
    </source>
</evidence>
<evidence type="ECO:0007744" key="14">
    <source>
        <dbReference type="PDB" id="7DRX"/>
    </source>
</evidence>
<evidence type="ECO:0007744" key="15">
    <source>
        <dbReference type="PDB" id="7DSH"/>
    </source>
</evidence>
<evidence type="ECO:0007744" key="16">
    <source>
        <dbReference type="PDB" id="7DSI"/>
    </source>
</evidence>
<evidence type="ECO:0007744" key="17">
    <source>
        <dbReference type="PDB" id="7F7F"/>
    </source>
</evidence>
<evidence type="ECO:0007744" key="18">
    <source>
        <dbReference type="PDB" id="7KY5"/>
    </source>
</evidence>
<evidence type="ECO:0007744" key="19">
    <source>
        <dbReference type="PDB" id="7KY7"/>
    </source>
</evidence>
<evidence type="ECO:0007744" key="20">
    <source>
        <dbReference type="PDB" id="7KY8"/>
    </source>
</evidence>
<evidence type="ECO:0007744" key="21">
    <source>
        <dbReference type="PDB" id="7KY9"/>
    </source>
</evidence>
<evidence type="ECO:0007744" key="22">
    <source>
        <dbReference type="PDB" id="7KYA"/>
    </source>
</evidence>
<evidence type="ECO:0007744" key="23">
    <source>
        <dbReference type="PDB" id="7KYB"/>
    </source>
</evidence>
<evidence type="ECO:0007744" key="24">
    <source>
        <dbReference type="PDB" id="7KYC"/>
    </source>
</evidence>
<evidence type="ECO:0007744" key="25">
    <source>
        <dbReference type="PDB" id="7WHV"/>
    </source>
</evidence>
<evidence type="ECO:0007744" key="26">
    <source>
        <dbReference type="PDB" id="7WHW"/>
    </source>
</evidence>
<evidence type="ECO:0007744" key="27">
    <source>
    </source>
</evidence>
<evidence type="ECO:0007744" key="28">
    <source>
    </source>
</evidence>
<evidence type="ECO:0007744" key="29">
    <source>
    </source>
</evidence>
<evidence type="ECO:0007829" key="30">
    <source>
        <dbReference type="PDB" id="7DRX"/>
    </source>
</evidence>
<evidence type="ECO:0007829" key="31">
    <source>
        <dbReference type="PDB" id="7DSI"/>
    </source>
</evidence>
<evidence type="ECO:0007829" key="32">
    <source>
        <dbReference type="PDB" id="7KY7"/>
    </source>
</evidence>
<evidence type="ECO:0007829" key="33">
    <source>
        <dbReference type="PDB" id="7KYC"/>
    </source>
</evidence>
<evidence type="ECO:0007829" key="34">
    <source>
        <dbReference type="PDB" id="7WHW"/>
    </source>
</evidence>
<keyword id="KW-0002">3D-structure</keyword>
<keyword id="KW-1003">Cell membrane</keyword>
<keyword id="KW-1015">Disulfide bond</keyword>
<keyword id="KW-0325">Glycoprotein</keyword>
<keyword id="KW-0472">Membrane</keyword>
<keyword id="KW-0597">Phosphoprotein</keyword>
<keyword id="KW-1185">Reference proteome</keyword>
<keyword id="KW-0812">Transmembrane</keyword>
<keyword id="KW-1133">Transmembrane helix</keyword>
<sequence>MVNFDLGQVGEVFRRKDKGAIVSGDNPEEEEDVDASEFEEDEVKPVRTKNRRPKEDAFTQQRLAAINPVLTPRTVLPLYLLIAVVFVIVGGCILAQNSKVDEVTIYYQDCMTNATSSWSDIPSEHWQFVFHKYKTYNTAPQWRFVDDESDDFTKQRGTCQIRFTTPSDMKNNVYLNYVLEKFAANHRRYVLSFSEDQIRGEDASYETVHDATGINCKPLSKNADGKIYYPCGLIANSMFNDTFPLQLTNVGDTSNNYSLTNKGINWESDKKRYKKTKYNYTQIAPPPYWEKMYPDGYNETNIPDIQDWEEFQNWMRPGAFDKITKLIRINKNDTLPAGEYQLDIGLHWPVLEFNGKKGIYLTHGSHLGGRNPFLGIVYLIGGCICAAMALILLTFWLFGGRKIADASSLSWNMK</sequence>
<organism>
    <name type="scientific">Saccharomyces cerevisiae (strain ATCC 204508 / S288c)</name>
    <name type="common">Baker's yeast</name>
    <dbReference type="NCBI Taxonomy" id="559292"/>
    <lineage>
        <taxon>Eukaryota</taxon>
        <taxon>Fungi</taxon>
        <taxon>Dikarya</taxon>
        <taxon>Ascomycota</taxon>
        <taxon>Saccharomycotina</taxon>
        <taxon>Saccharomycetes</taxon>
        <taxon>Saccharomycetales</taxon>
        <taxon>Saccharomycetaceae</taxon>
        <taxon>Saccharomyces</taxon>
    </lineage>
</organism>
<protein>
    <recommendedName>
        <fullName evidence="12">Phospholipid-transporting ATPase accessory subunit LEM3</fullName>
    </recommendedName>
    <alternativeName>
        <fullName>Alkylphosphocholine resistance protein LEM3</fullName>
    </alternativeName>
    <alternativeName>
        <fullName>Brefeldin-A sensitivity protein 3</fullName>
    </alternativeName>
    <alternativeName>
        <fullName>Ro-sensitive 3</fullName>
    </alternativeName>
</protein>
<comment type="function">
    <text evidence="3 4 7 8">Accessory component of a P4-ATPase flippase complex which catalyzes the hydrolysis of ATP coupled to the transport of glucosylceramide, phosphatidylcholine, phosphatidylethanolamine, and small amounts of phosphatidylserine from the lumenal to the cytosolic leaflet of the cell membrane and ensures the maintenance of asymmetric distribution of phospholipids (PubMed:12133835, PubMed:12842877, PubMed:22791719). Contributes to substrate binding and specificity of the P4-ATPase catalytic subunit (PubMed:33320091).</text>
</comment>
<comment type="subunit">
    <text evidence="6 7 8 9">Component of a flippase complex consisting of DNF1 or DNF2 and LEM3 (PubMed:22791719, PubMed:33320091, PubMed:35294892). Interacts with DNF1; the interaction is direct and required for their mutual export from the endoplasmic reticulum (PubMed:19411703, PubMed:22791719, PubMed:33320091, PubMed:35294892). Interacts with DNF2; the interaction is direct and required for their mutual export from the endoplasmic reticulum (PubMed:22791719, PubMed:33320091).</text>
</comment>
<comment type="interaction">
    <interactant intactId="EBI-28396">
        <id>P42838</id>
    </interactant>
    <interactant intactId="EBI-3121">
        <id>P32660</id>
        <label>DNF1</label>
    </interactant>
    <organismsDiffer>false</organismsDiffer>
    <experiments>9</experiments>
</comment>
<comment type="interaction">
    <interactant intactId="EBI-28396">
        <id>P42838</id>
    </interactant>
    <interactant intactId="EBI-3114">
        <id>Q12675</id>
        <label>DNF2</label>
    </interactant>
    <organismsDiffer>false</organismsDiffer>
    <experiments>3</experiments>
</comment>
<comment type="subcellular location">
    <subcellularLocation>
        <location evidence="3 13">Cell membrane</location>
        <topology evidence="1">Multi-pass membrane protein</topology>
    </subcellularLocation>
</comment>
<comment type="disruption phenotype">
    <text evidence="7">Resistance to miltefosine (cytotoxic phosphatidylcholine analog) and sensitive to duramycin (phosphatidylethanolamine-binding cytotoxin).</text>
</comment>
<comment type="miscellaneous">
    <text evidence="5">Present with 2460 molecules/cell in log phase SD medium.</text>
</comment>
<comment type="similarity">
    <text evidence="12">Belongs to the CDC50/LEM3 family.</text>
</comment>
<proteinExistence type="evidence at protein level"/>
<accession>P42838</accession>
<accession>D6W0M3</accession>
<reference key="1">
    <citation type="journal article" date="1995" name="Yeast">
        <title>Sequencing analysis of a 15.4 kb fragment of yeast chromosome XIV identifies the RPD3, PAS8 and KRE1 loci, five new open reading frames.</title>
        <authorList>
            <person name="Maftahi M."/>
            <person name="Nicaud J.-M."/>
            <person name="Levesque H."/>
            <person name="Gaillardin C."/>
        </authorList>
    </citation>
    <scope>NUCLEOTIDE SEQUENCE [GENOMIC DNA]</scope>
    <source>
        <strain>S288c / FY1676</strain>
    </source>
</reference>
<reference key="2">
    <citation type="journal article" date="1997" name="Nature">
        <title>The nucleotide sequence of Saccharomyces cerevisiae chromosome XIV and its evolutionary implications.</title>
        <authorList>
            <person name="Philippsen P."/>
            <person name="Kleine K."/>
            <person name="Poehlmann R."/>
            <person name="Duesterhoeft A."/>
            <person name="Hamberg K."/>
            <person name="Hegemann J.H."/>
            <person name="Obermaier B."/>
            <person name="Urrestarazu L.A."/>
            <person name="Aert R."/>
            <person name="Albermann K."/>
            <person name="Altmann R."/>
            <person name="Andre B."/>
            <person name="Baladron V."/>
            <person name="Ballesta J.P.G."/>
            <person name="Becam A.-M."/>
            <person name="Beinhauer J.D."/>
            <person name="Boskovic J."/>
            <person name="Buitrago M.J."/>
            <person name="Bussereau F."/>
            <person name="Coster F."/>
            <person name="Crouzet M."/>
            <person name="D'Angelo M."/>
            <person name="Dal Pero F."/>
            <person name="De Antoni A."/>
            <person name="del Rey F."/>
            <person name="Doignon F."/>
            <person name="Domdey H."/>
            <person name="Dubois E."/>
            <person name="Fiedler T.A."/>
            <person name="Fleig U."/>
            <person name="Floeth M."/>
            <person name="Fritz C."/>
            <person name="Gaillardin C."/>
            <person name="Garcia-Cantalejo J.M."/>
            <person name="Glansdorff N."/>
            <person name="Goffeau A."/>
            <person name="Gueldener U."/>
            <person name="Herbert C.J."/>
            <person name="Heumann K."/>
            <person name="Heuss-Neitzel D."/>
            <person name="Hilbert H."/>
            <person name="Hinni K."/>
            <person name="Iraqui Houssaini I."/>
            <person name="Jacquet M."/>
            <person name="Jimenez A."/>
            <person name="Jonniaux J.-L."/>
            <person name="Karpfinger-Hartl L."/>
            <person name="Lanfranchi G."/>
            <person name="Lepingle A."/>
            <person name="Levesque H."/>
            <person name="Lyck R."/>
            <person name="Maftahi M."/>
            <person name="Mallet L."/>
            <person name="Maurer C.T.C."/>
            <person name="Messenguy F."/>
            <person name="Mewes H.-W."/>
            <person name="Moestl D."/>
            <person name="Nasr F."/>
            <person name="Nicaud J.-M."/>
            <person name="Niedenthal R.K."/>
            <person name="Pandolfo D."/>
            <person name="Pierard A."/>
            <person name="Piravandi E."/>
            <person name="Planta R.J."/>
            <person name="Pohl T.M."/>
            <person name="Purnelle B."/>
            <person name="Rebischung C."/>
            <person name="Remacha M.A."/>
            <person name="Revuelta J.L."/>
            <person name="Rinke M."/>
            <person name="Saiz J.E."/>
            <person name="Sartorello F."/>
            <person name="Scherens B."/>
            <person name="Sen-Gupta M."/>
            <person name="Soler-Mira A."/>
            <person name="Urbanus J.H.M."/>
            <person name="Valle G."/>
            <person name="Van Dyck L."/>
            <person name="Verhasselt P."/>
            <person name="Vierendeels F."/>
            <person name="Vissers S."/>
            <person name="Voet M."/>
            <person name="Volckaert G."/>
            <person name="Wach A."/>
            <person name="Wambutt R."/>
            <person name="Wedler H."/>
            <person name="Zollner A."/>
            <person name="Hani J."/>
        </authorList>
    </citation>
    <scope>NUCLEOTIDE SEQUENCE [LARGE SCALE GENOMIC DNA]</scope>
    <source>
        <strain>ATCC 204508 / S288c</strain>
    </source>
</reference>
<reference key="3">
    <citation type="journal article" date="2014" name="G3 (Bethesda)">
        <title>The reference genome sequence of Saccharomyces cerevisiae: Then and now.</title>
        <authorList>
            <person name="Engel S.R."/>
            <person name="Dietrich F.S."/>
            <person name="Fisk D.G."/>
            <person name="Binkley G."/>
            <person name="Balakrishnan R."/>
            <person name="Costanzo M.C."/>
            <person name="Dwight S.S."/>
            <person name="Hitz B.C."/>
            <person name="Karra K."/>
            <person name="Nash R.S."/>
            <person name="Weng S."/>
            <person name="Wong E.D."/>
            <person name="Lloyd P."/>
            <person name="Skrzypek M.S."/>
            <person name="Miyasato S.R."/>
            <person name="Simison M."/>
            <person name="Cherry J.M."/>
        </authorList>
    </citation>
    <scope>GENOME REANNOTATION</scope>
    <source>
        <strain>ATCC 204508 / S288c</strain>
    </source>
</reference>
<reference key="4">
    <citation type="journal article" date="2002" name="J. Biol. Chem.">
        <title>A novel membrane protein, Ros3p, is required for phospholipid translocation across the plasma membrane in Saccharomyces cerevisiae.</title>
        <authorList>
            <person name="Kato U."/>
            <person name="Emoto K."/>
            <person name="Fredriksson C."/>
            <person name="Nakamura H."/>
            <person name="Ohta A."/>
            <person name="Kobayashi T."/>
            <person name="Murakami-Murofushi K."/>
            <person name="Kobayashi T."/>
            <person name="Umeda M."/>
        </authorList>
    </citation>
    <scope>FUNCTION</scope>
    <scope>SUBCELLULAR LOCATION</scope>
</reference>
<reference key="5">
    <citation type="journal article" date="2003" name="J. Biol. Chem.">
        <title>Lem3p is essential for the uptake and potency of alkylphosphocholine drugs, edelfosine and miltefosine.</title>
        <authorList>
            <person name="Hanson P.K."/>
            <person name="Malone L."/>
            <person name="Birchmore J.L."/>
            <person name="Nichols J.W."/>
        </authorList>
    </citation>
    <scope>FUNCTION</scope>
</reference>
<reference key="6">
    <citation type="journal article" date="2003" name="Nature">
        <title>Global analysis of protein expression in yeast.</title>
        <authorList>
            <person name="Ghaemmaghami S."/>
            <person name="Huh W.-K."/>
            <person name="Bower K."/>
            <person name="Howson R.W."/>
            <person name="Belle A."/>
            <person name="Dephoure N."/>
            <person name="O'Shea E.K."/>
            <person name="Weissman J.S."/>
        </authorList>
    </citation>
    <scope>LEVEL OF PROTEIN EXPRESSION [LARGE SCALE ANALYSIS]</scope>
</reference>
<reference key="7">
    <citation type="journal article" date="2007" name="J. Proteome Res.">
        <title>Large-scale phosphorylation analysis of alpha-factor-arrested Saccharomyces cerevisiae.</title>
        <authorList>
            <person name="Li X."/>
            <person name="Gerber S.A."/>
            <person name="Rudner A.D."/>
            <person name="Beausoleil S.A."/>
            <person name="Haas W."/>
            <person name="Villen J."/>
            <person name="Elias J.E."/>
            <person name="Gygi S.P."/>
        </authorList>
    </citation>
    <scope>PHOSPHORYLATION [LARGE SCALE ANALYSIS] AT SER-36</scope>
    <scope>IDENTIFICATION BY MASS SPECTROMETRY [LARGE SCALE ANALYSIS]</scope>
    <source>
        <strain>ADR376</strain>
    </source>
</reference>
<reference key="8">
    <citation type="journal article" date="2008" name="Mol. Cell. Proteomics">
        <title>A multidimensional chromatography technology for in-depth phosphoproteome analysis.</title>
        <authorList>
            <person name="Albuquerque C.P."/>
            <person name="Smolka M.B."/>
            <person name="Payne S.H."/>
            <person name="Bafna V."/>
            <person name="Eng J."/>
            <person name="Zhou H."/>
        </authorList>
    </citation>
    <scope>PHOSPHORYLATION [LARGE SCALE ANALYSIS] AT SER-36</scope>
    <scope>IDENTIFICATION BY MASS SPECTROMETRY [LARGE SCALE ANALYSIS]</scope>
</reference>
<reference key="9">
    <citation type="journal article" date="2009" name="J. Biol. Chem.">
        <title>Cdc50p plays a vital role in the ATPase reaction cycle of the putative aminophospholipid transporter Drs2p.</title>
        <authorList>
            <person name="Lenoir G."/>
            <person name="Williamson P."/>
            <person name="Puts C.F."/>
            <person name="Holthuis J.C."/>
        </authorList>
    </citation>
    <scope>INTERACTION WITH DNF1</scope>
</reference>
<reference key="10">
    <citation type="journal article" date="2009" name="Science">
        <title>Global analysis of Cdk1 substrate phosphorylation sites provides insights into evolution.</title>
        <authorList>
            <person name="Holt L.J."/>
            <person name="Tuch B.B."/>
            <person name="Villen J."/>
            <person name="Johnson A.D."/>
            <person name="Gygi S.P."/>
            <person name="Morgan D.O."/>
        </authorList>
    </citation>
    <scope>PHOSPHORYLATION [LARGE SCALE ANALYSIS] AT SER-36</scope>
    <scope>IDENTIFICATION BY MASS SPECTROMETRY [LARGE SCALE ANALYSIS]</scope>
</reference>
<reference key="11">
    <citation type="journal article" date="2012" name="Proc. Natl. Acad. Sci. U.S.A.">
        <title>N-terminal acetylome analyses and functional insights of the N-terminal acetyltransferase NatB.</title>
        <authorList>
            <person name="Van Damme P."/>
            <person name="Lasa M."/>
            <person name="Polevoda B."/>
            <person name="Gazquez C."/>
            <person name="Elosegui-Artola A."/>
            <person name="Kim D.S."/>
            <person name="De Juan-Pardo E."/>
            <person name="Demeyer K."/>
            <person name="Hole K."/>
            <person name="Larrea E."/>
            <person name="Timmerman E."/>
            <person name="Prieto J."/>
            <person name="Arnesen T."/>
            <person name="Sherman F."/>
            <person name="Gevaert K."/>
            <person name="Aldabe R."/>
        </authorList>
    </citation>
    <scope>IDENTIFICATION BY MASS SPECTROMETRY [LARGE SCALE ANALYSIS]</scope>
</reference>
<reference key="12">
    <citation type="journal article" date="2012" name="J. Biol. Chem.">
        <title>Mapping functional interactions in a heterodimeric phospholipid pump.</title>
        <authorList>
            <person name="Puts C.F."/>
            <person name="Panatala R."/>
            <person name="Hennrich H."/>
            <person name="Tsareva A."/>
            <person name="Williamson P."/>
            <person name="Holthuis J.C."/>
        </authorList>
    </citation>
    <scope>FUNCTION</scope>
    <scope>IDENTIFICATION IN A COMPLEX WITH DNF1</scope>
    <scope>INTERACTION WITH DNF1</scope>
    <scope>SUBCELLULAR LOCATION</scope>
    <scope>DISRUPTION PHENOTYPE</scope>
    <scope>DISULFIDE BOND</scope>
    <scope>MUTAGENESIS OF ALA-65; ALA-83; CYS-110; CYS-159; CYS-216; CYS-231; SER-237; GLY-375 AND ALA-404</scope>
</reference>
<reference evidence="18 19 20 21 22 23 24" key="13">
    <citation type="journal article" date="2020" name="Elife">
        <title>Transport mechanism of P4 ATPase phosphatidylcholine flippases.</title>
        <authorList>
            <person name="Bai L."/>
            <person name="You Q."/>
            <person name="Jain B.K."/>
            <person name="Duan H.D."/>
            <person name="Kovach A."/>
            <person name="Graham T.R."/>
            <person name="Li H."/>
        </authorList>
    </citation>
    <scope>STRUCTURE BY ELECTRON MICROSCOPY (2.80 ANGSTROMS) IN COMPLEX WITH DNF1</scope>
    <scope>FUNCTION</scope>
    <scope>IDENTIFICATION IN A COMPLEX WITH DNF1 AND DNF2</scope>
    <scope>INTERACTION WITH DNF1 AND DNF2</scope>
    <scope>GLYCOSYLATION AT ASN-240; ASN-256; ASN-298 AND ASN-332</scope>
    <scope>DISULFIDE BONDS</scope>
    <scope>MUTAGENESIS OF ARG-51</scope>
</reference>
<reference evidence="14 15 16 17 25 26" key="14">
    <citation type="journal article" date="2022" name="Cell Rep.">
        <title>Conformational changes of a phosphatidylcholine flippase in lipid membranes.</title>
        <authorList>
            <person name="Xu J."/>
            <person name="He Y."/>
            <person name="Wu X."/>
            <person name="Li L."/>
        </authorList>
    </citation>
    <scope>STRUCTURE BY ELECTRON MICROSCOPY (2.80 ANGSTROMS) IN COMPLEX WITH DNF1</scope>
    <scope>IDENTIFICATION IN A COMPLEX WITH DNF1</scope>
    <scope>INTERACTION WITH DNF1</scope>
    <scope>DISULFIDE BONDS</scope>
</reference>